<protein>
    <recommendedName>
        <fullName evidence="1">Protein translocase subunit SecE</fullName>
    </recommendedName>
    <alternativeName>
        <fullName evidence="1">Protein transport protein Sec61 gamma subunit homolog</fullName>
    </alternativeName>
</protein>
<gene>
    <name evidence="1" type="primary">secE</name>
    <name type="ordered locus">MMP1435</name>
</gene>
<comment type="function">
    <text evidence="1">Essential subunit of the Sec protein translocation channel SecYEG. Clamps together the 2 halves of SecY. May contact the channel plug during translocation.</text>
</comment>
<comment type="subunit">
    <text evidence="1">Component of the Sec protein translocase complex. Heterotrimer consisting of SecY (alpha), SecG (beta) and SecE (gamma) subunits. The heterotrimers can form oligomers, although 1 heterotrimer is thought to be able to translocate proteins. Interacts with the ribosome. May interact with SecDF, and other proteins may be involved.</text>
</comment>
<comment type="subcellular location">
    <subcellularLocation>
        <location evidence="1">Cell membrane</location>
        <topology evidence="1">Single-pass membrane protein</topology>
    </subcellularLocation>
</comment>
<comment type="similarity">
    <text evidence="1">Belongs to the SecE/SEC61-gamma family.</text>
</comment>
<comment type="sequence caution" evidence="2">
    <conflict type="erroneous initiation">
        <sequence resource="EMBL-CDS" id="CAF30991"/>
    </conflict>
    <text>Extended N-terminus.</text>
</comment>
<reference key="1">
    <citation type="journal article" date="2004" name="J. Bacteriol.">
        <title>Complete genome sequence of the genetically tractable hydrogenotrophic methanogen Methanococcus maripaludis.</title>
        <authorList>
            <person name="Hendrickson E.L."/>
            <person name="Kaul R."/>
            <person name="Zhou Y."/>
            <person name="Bovee D."/>
            <person name="Chapman P."/>
            <person name="Chung J."/>
            <person name="Conway de Macario E."/>
            <person name="Dodsworth J.A."/>
            <person name="Gillett W."/>
            <person name="Graham D.E."/>
            <person name="Hackett M."/>
            <person name="Haydock A.K."/>
            <person name="Kang A."/>
            <person name="Land M.L."/>
            <person name="Levy R."/>
            <person name="Lie T.J."/>
            <person name="Major T.A."/>
            <person name="Moore B.C."/>
            <person name="Porat I."/>
            <person name="Palmeiri A."/>
            <person name="Rouse G."/>
            <person name="Saenphimmachak C."/>
            <person name="Soell D."/>
            <person name="Van Dien S."/>
            <person name="Wang T."/>
            <person name="Whitman W.B."/>
            <person name="Xia Q."/>
            <person name="Zhang Y."/>
            <person name="Larimer F.W."/>
            <person name="Olson M.V."/>
            <person name="Leigh J.A."/>
        </authorList>
    </citation>
    <scope>NUCLEOTIDE SEQUENCE [LARGE SCALE GENOMIC DNA]</scope>
    <source>
        <strain>DSM 14266 / JCM 13030 / NBRC 101832 / S2 / LL</strain>
    </source>
</reference>
<proteinExistence type="inferred from homology"/>
<dbReference type="EMBL" id="BX950229">
    <property type="protein sequence ID" value="CAF30991.1"/>
    <property type="status" value="ALT_INIT"/>
    <property type="molecule type" value="Genomic_DNA"/>
</dbReference>
<dbReference type="SMR" id="Q6LXB7"/>
<dbReference type="STRING" id="267377.MMP1435"/>
<dbReference type="EnsemblBacteria" id="CAF30991">
    <property type="protein sequence ID" value="CAF30991"/>
    <property type="gene ID" value="MMP1435"/>
</dbReference>
<dbReference type="KEGG" id="mmp:MMP1435"/>
<dbReference type="PATRIC" id="fig|267377.15.peg.1471"/>
<dbReference type="eggNOG" id="arCOG02204">
    <property type="taxonomic scope" value="Archaea"/>
</dbReference>
<dbReference type="HOGENOM" id="CLU_191921_0_0_2"/>
<dbReference type="Proteomes" id="UP000000590">
    <property type="component" value="Chromosome"/>
</dbReference>
<dbReference type="GO" id="GO:0005886">
    <property type="term" value="C:plasma membrane"/>
    <property type="evidence" value="ECO:0007669"/>
    <property type="project" value="UniProtKB-SubCell"/>
</dbReference>
<dbReference type="GO" id="GO:0008320">
    <property type="term" value="F:protein transmembrane transporter activity"/>
    <property type="evidence" value="ECO:0007669"/>
    <property type="project" value="UniProtKB-UniRule"/>
</dbReference>
<dbReference type="GO" id="GO:0065002">
    <property type="term" value="P:intracellular protein transmembrane transport"/>
    <property type="evidence" value="ECO:0007669"/>
    <property type="project" value="UniProtKB-UniRule"/>
</dbReference>
<dbReference type="GO" id="GO:0009306">
    <property type="term" value="P:protein secretion"/>
    <property type="evidence" value="ECO:0007669"/>
    <property type="project" value="UniProtKB-UniRule"/>
</dbReference>
<dbReference type="GO" id="GO:0006605">
    <property type="term" value="P:protein targeting"/>
    <property type="evidence" value="ECO:0007669"/>
    <property type="project" value="UniProtKB-UniRule"/>
</dbReference>
<dbReference type="Gene3D" id="1.20.5.820">
    <property type="entry name" value="Preprotein translocase SecE subunit"/>
    <property type="match status" value="1"/>
</dbReference>
<dbReference type="HAMAP" id="MF_00422">
    <property type="entry name" value="SecE"/>
    <property type="match status" value="1"/>
</dbReference>
<dbReference type="InterPro" id="IPR023391">
    <property type="entry name" value="Prot_translocase_SecE_dom_sf"/>
</dbReference>
<dbReference type="InterPro" id="IPR008158">
    <property type="entry name" value="Translocase_Sec61-g"/>
</dbReference>
<dbReference type="InterPro" id="IPR001901">
    <property type="entry name" value="Translocase_SecE/Sec61-g"/>
</dbReference>
<dbReference type="NCBIfam" id="NF006907">
    <property type="entry name" value="PRK09400.1-2"/>
    <property type="match status" value="1"/>
</dbReference>
<dbReference type="NCBIfam" id="TIGR00327">
    <property type="entry name" value="secE_euk_arch"/>
    <property type="match status" value="1"/>
</dbReference>
<dbReference type="Pfam" id="PF00584">
    <property type="entry name" value="SecE"/>
    <property type="match status" value="1"/>
</dbReference>
<dbReference type="SUPFAM" id="SSF103456">
    <property type="entry name" value="Preprotein translocase SecE subunit"/>
    <property type="match status" value="1"/>
</dbReference>
<feature type="chain" id="PRO_0000104222" description="Protein translocase subunit SecE">
    <location>
        <begin position="1"/>
        <end position="69"/>
    </location>
</feature>
<feature type="transmembrane region" description="Helical" evidence="1">
    <location>
        <begin position="43"/>
        <end position="63"/>
    </location>
</feature>
<accession>Q6LXB7</accession>
<evidence type="ECO:0000255" key="1">
    <source>
        <dbReference type="HAMAP-Rule" id="MF_00422"/>
    </source>
</evidence>
<evidence type="ECO:0000305" key="2"/>
<name>SECE_METMP</name>
<sequence>MQKSKLNTTLNGLKDFLHQCRRVLMISRKPTRQEYITISKVTGLGICLLGFVGFVIHVPITYLKALIKP</sequence>
<organism>
    <name type="scientific">Methanococcus maripaludis (strain DSM 14266 / JCM 13030 / NBRC 101832 / S2 / LL)</name>
    <dbReference type="NCBI Taxonomy" id="267377"/>
    <lineage>
        <taxon>Archaea</taxon>
        <taxon>Methanobacteriati</taxon>
        <taxon>Methanobacteriota</taxon>
        <taxon>Methanomada group</taxon>
        <taxon>Methanococci</taxon>
        <taxon>Methanococcales</taxon>
        <taxon>Methanococcaceae</taxon>
        <taxon>Methanococcus</taxon>
    </lineage>
</organism>
<keyword id="KW-1003">Cell membrane</keyword>
<keyword id="KW-0472">Membrane</keyword>
<keyword id="KW-0653">Protein transport</keyword>
<keyword id="KW-1185">Reference proteome</keyword>
<keyword id="KW-0811">Translocation</keyword>
<keyword id="KW-0812">Transmembrane</keyword>
<keyword id="KW-1133">Transmembrane helix</keyword>
<keyword id="KW-0813">Transport</keyword>